<keyword id="KW-0408">Iron</keyword>
<keyword id="KW-0479">Metal-binding</keyword>
<keyword id="KW-0663">Pyridoxal phosphate</keyword>
<keyword id="KW-1185">Reference proteome</keyword>
<keyword id="KW-0784">Thiamine biosynthesis</keyword>
<keyword id="KW-0808">Transferase</keyword>
<reference key="1">
    <citation type="journal article" date="1996" name="EMBO J.">
        <title>Complete nucleotide sequence of Saccharomyces cerevisiae chromosome X.</title>
        <authorList>
            <person name="Galibert F."/>
            <person name="Alexandraki D."/>
            <person name="Baur A."/>
            <person name="Boles E."/>
            <person name="Chalwatzis N."/>
            <person name="Chuat J.-C."/>
            <person name="Coster F."/>
            <person name="Cziepluch C."/>
            <person name="de Haan M."/>
            <person name="Domdey H."/>
            <person name="Durand P."/>
            <person name="Entian K.-D."/>
            <person name="Gatius M."/>
            <person name="Goffeau A."/>
            <person name="Grivell L.A."/>
            <person name="Hennemann A."/>
            <person name="Herbert C.J."/>
            <person name="Heumann K."/>
            <person name="Hilger F."/>
            <person name="Hollenberg C.P."/>
            <person name="Huang M.-E."/>
            <person name="Jacq C."/>
            <person name="Jauniaux J.-C."/>
            <person name="Katsoulou C."/>
            <person name="Kirchrath L."/>
            <person name="Kleine K."/>
            <person name="Kordes E."/>
            <person name="Koetter P."/>
            <person name="Liebl S."/>
            <person name="Louis E.J."/>
            <person name="Manus V."/>
            <person name="Mewes H.-W."/>
            <person name="Miosga T."/>
            <person name="Obermaier B."/>
            <person name="Perea J."/>
            <person name="Pohl T.M."/>
            <person name="Portetelle D."/>
            <person name="Pujol A."/>
            <person name="Purnelle B."/>
            <person name="Ramezani Rad M."/>
            <person name="Rasmussen S.W."/>
            <person name="Rose M."/>
            <person name="Rossau R."/>
            <person name="Schaaff-Gerstenschlaeger I."/>
            <person name="Smits P.H.M."/>
            <person name="Scarcez T."/>
            <person name="Soriano N."/>
            <person name="To Van D."/>
            <person name="Tzermia M."/>
            <person name="Van Broekhoven A."/>
            <person name="Vandenbol M."/>
            <person name="Wedler H."/>
            <person name="von Wettstein D."/>
            <person name="Wambutt R."/>
            <person name="Zagulski M."/>
            <person name="Zollner A."/>
            <person name="Karpfinger-Hartl L."/>
        </authorList>
    </citation>
    <scope>NUCLEOTIDE SEQUENCE [LARGE SCALE GENOMIC DNA]</scope>
    <source>
        <strain>ATCC 204508 / S288c</strain>
    </source>
</reference>
<reference key="2">
    <citation type="journal article" date="2014" name="G3 (Bethesda)">
        <title>The reference genome sequence of Saccharomyces cerevisiae: Then and now.</title>
        <authorList>
            <person name="Engel S.R."/>
            <person name="Dietrich F.S."/>
            <person name="Fisk D.G."/>
            <person name="Binkley G."/>
            <person name="Balakrishnan R."/>
            <person name="Costanzo M.C."/>
            <person name="Dwight S.S."/>
            <person name="Hitz B.C."/>
            <person name="Karra K."/>
            <person name="Nash R.S."/>
            <person name="Weng S."/>
            <person name="Wong E.D."/>
            <person name="Lloyd P."/>
            <person name="Skrzypek M.S."/>
            <person name="Miyasato S.R."/>
            <person name="Simison M."/>
            <person name="Cherry J.M."/>
        </authorList>
    </citation>
    <scope>GENOME REANNOTATION</scope>
    <source>
        <strain>ATCC 204508 / S288c</strain>
    </source>
</reference>
<reference key="3">
    <citation type="journal article" date="2003" name="Microbiology">
        <title>The THI5 gene family of Saccharomyces cerevisiae: distribution of homologues among the hemiascomycetes and functional redundancy in the aerobic biosynthesis of thiamin from pyridoxine.</title>
        <authorList>
            <person name="Wightman R."/>
            <person name="Meacock P.A."/>
        </authorList>
    </citation>
    <scope>PATHWAY</scope>
</reference>
<reference key="4">
    <citation type="journal article" date="2003" name="Nature">
        <title>Global analysis of protein expression in yeast.</title>
        <authorList>
            <person name="Ghaemmaghami S."/>
            <person name="Huh W.-K."/>
            <person name="Bower K."/>
            <person name="Howson R.W."/>
            <person name="Belle A."/>
            <person name="Dephoure N."/>
            <person name="O'Shea E.K."/>
            <person name="Weissman J.S."/>
        </authorList>
    </citation>
    <scope>LEVEL OF PROTEIN EXPRESSION [LARGE SCALE ANALYSIS]</scope>
</reference>
<name>THI11_YEAST</name>
<evidence type="ECO:0000250" key="1">
    <source>
        <dbReference type="UniProtKB" id="C4YMW2"/>
    </source>
</evidence>
<evidence type="ECO:0000250" key="2">
    <source>
        <dbReference type="UniProtKB" id="P43534"/>
    </source>
</evidence>
<evidence type="ECO:0000269" key="3">
    <source>
    </source>
</evidence>
<evidence type="ECO:0000303" key="4">
    <source>
    </source>
</evidence>
<evidence type="ECO:0000305" key="5"/>
<evidence type="ECO:0000305" key="6">
    <source>
    </source>
</evidence>
<evidence type="ECO:0000312" key="7">
    <source>
        <dbReference type="SGD" id="S000003917"/>
    </source>
</evidence>
<gene>
    <name evidence="4" type="primary">THI11</name>
    <name evidence="7" type="ordered locus">YJR156C</name>
    <name type="ORF">J2250</name>
</gene>
<sequence length="340" mass="38632">MSTDKITFLLNWQPTPYHIPIFLAQTKGYFKEQGLDIAILEPTNPSDVTELIGSGKVDMGLKAMIHTLAAKARGFPVTSVASLLDEPFTGVLYLKGSGITEDFQSLKGKKIGYVGEFGKIQIDELTKHYGMKPEDYTAVRCGMNVAKYIIEDKIDAGIGIECMQQVELEEYLAKQGRPASDAKMLRIDKLACLGCCCFCTVLYICNDEFLKKNPEKVRKFLKAIKKATDYVLADPVKAWKEYIDFKPQLNNDLSYKQYQRCYAYFSSSLYNVHRDWKKVTGYGKRLAILPPDYVSNYTNEYLSWPEPEEVSDPLEAQRLMAIHQEKCRQEGTFKRLALPA</sequence>
<feature type="chain" id="PRO_0000211619" description="4-amino-5-hydroxymethyl-2-methylpyrimidine phosphate synthase THI11">
    <location>
        <begin position="1"/>
        <end position="340"/>
    </location>
</feature>
<feature type="short sequence motif" description="CCCFC; essential for catalytic activity, may be the site of iron coordination" evidence="2">
    <location>
        <begin position="195"/>
        <end position="199"/>
    </location>
</feature>
<feature type="active site" evidence="2">
    <location>
        <position position="66"/>
    </location>
</feature>
<feature type="binding site" evidence="2">
    <location>
        <begin position="115"/>
        <end position="118"/>
    </location>
    <ligand>
        <name>pyridoxal 5'-phosphate</name>
        <dbReference type="ChEBI" id="CHEBI:597326"/>
    </ligand>
</feature>
<feature type="modified residue" description="N6-(pyridoxal phosphate)lysine" evidence="2">
    <location>
        <position position="62"/>
    </location>
</feature>
<proteinExistence type="evidence at protein level"/>
<accession>P47183</accession>
<accession>D6VWX5</accession>
<comment type="function">
    <text evidence="2">Responsible for the formation of the pyrimidine heterocycle in the thiamine biosynthesis pathway. Catalyzes the formation of hydroxymethylpyrimidine phosphate (HMP-P) from histidine and pyridoxal phosphate (PLP). The protein uses PLP and the active site histidine to form HMP-P, generating an inactive enzyme. The enzyme can only undergo a single turnover, which suggests it is a suicide enzyme.</text>
</comment>
<comment type="catalytic activity">
    <reaction evidence="2">
        <text>N(6)-(pyridoxal phosphate)-L-lysyl-[4-amino-5-hydroxymethyl-2-methylpyrimidine phosphate synthase] + L-histidyl-[4-amino-5-hydroxymethyl-2-methylpyrimidine phosphate synthase] + 2 Fe(3+) + 4 H2O = L-lysyl-[4-amino-5-hydroxymethyl-2-methylpyrimidine phosphate synthase] + (2S)-2-amino-5-hydroxy-4-oxopentanoyl-[4-amino-5-hydroxymethyl-2-methylpyrimidine phosphate synthase] + 4-amino-2-methyl-5-(phosphooxymethyl)pyrimidine + 3-oxopropanoate + 2 Fe(2+) + 2 H(+)</text>
        <dbReference type="Rhea" id="RHEA:65756"/>
        <dbReference type="Rhea" id="RHEA-COMP:16892"/>
        <dbReference type="Rhea" id="RHEA-COMP:16893"/>
        <dbReference type="Rhea" id="RHEA-COMP:16894"/>
        <dbReference type="Rhea" id="RHEA-COMP:16895"/>
        <dbReference type="ChEBI" id="CHEBI:15377"/>
        <dbReference type="ChEBI" id="CHEBI:15378"/>
        <dbReference type="ChEBI" id="CHEBI:29033"/>
        <dbReference type="ChEBI" id="CHEBI:29034"/>
        <dbReference type="ChEBI" id="CHEBI:29969"/>
        <dbReference type="ChEBI" id="CHEBI:29979"/>
        <dbReference type="ChEBI" id="CHEBI:33190"/>
        <dbReference type="ChEBI" id="CHEBI:58354"/>
        <dbReference type="ChEBI" id="CHEBI:143915"/>
        <dbReference type="ChEBI" id="CHEBI:157692"/>
    </reaction>
    <physiologicalReaction direction="left-to-right" evidence="2">
        <dbReference type="Rhea" id="RHEA:65757"/>
    </physiologicalReaction>
</comment>
<comment type="cofactor">
    <cofactor evidence="2">
        <name>Fe cation</name>
        <dbReference type="ChEBI" id="CHEBI:24875"/>
    </cofactor>
</comment>
<comment type="pathway">
    <text evidence="6">Cofactor biosynthesis; thiamine diphosphate biosynthesis.</text>
</comment>
<comment type="subunit">
    <text evidence="2">Homodimer.</text>
</comment>
<comment type="miscellaneous">
    <text evidence="3">Present with 752 molecules/cell in log phase SD medium.</text>
</comment>
<comment type="similarity">
    <text evidence="5">Belongs to the NMT1/THI5 family.</text>
</comment>
<protein>
    <recommendedName>
        <fullName evidence="2">4-amino-5-hydroxymethyl-2-methylpyrimidine phosphate synthase THI11</fullName>
        <shortName evidence="2">HMP-P synthase</shortName>
        <shortName evidence="2">Hydroxymethylpyrimidine phosphate synthase</shortName>
        <ecNumber evidence="2">2.-.-.-</ecNumber>
    </recommendedName>
    <alternativeName>
        <fullName evidence="4">Thiamine biosynthesis protein 11</fullName>
    </alternativeName>
    <alternativeName>
        <fullName evidence="1">Thiamine pyrimidine synthase</fullName>
    </alternativeName>
</protein>
<organism>
    <name type="scientific">Saccharomyces cerevisiae (strain ATCC 204508 / S288c)</name>
    <name type="common">Baker's yeast</name>
    <dbReference type="NCBI Taxonomy" id="559292"/>
    <lineage>
        <taxon>Eukaryota</taxon>
        <taxon>Fungi</taxon>
        <taxon>Dikarya</taxon>
        <taxon>Ascomycota</taxon>
        <taxon>Saccharomycotina</taxon>
        <taxon>Saccharomycetes</taxon>
        <taxon>Saccharomycetales</taxon>
        <taxon>Saccharomycetaceae</taxon>
        <taxon>Saccharomyces</taxon>
    </lineage>
</organism>
<dbReference type="EC" id="2.-.-.-" evidence="2"/>
<dbReference type="EMBL" id="Z49656">
    <property type="protein sequence ID" value="CAA89689.1"/>
    <property type="molecule type" value="Genomic_DNA"/>
</dbReference>
<dbReference type="EMBL" id="BK006943">
    <property type="protein sequence ID" value="DAA08941.1"/>
    <property type="molecule type" value="Genomic_DNA"/>
</dbReference>
<dbReference type="RefSeq" id="NP_012690.3">
    <property type="nucleotide sequence ID" value="NM_001181814.3"/>
</dbReference>
<dbReference type="SMR" id="P47183"/>
<dbReference type="BioGRID" id="33911">
    <property type="interactions" value="30"/>
</dbReference>
<dbReference type="FunCoup" id="P47183">
    <property type="interactions" value="190"/>
</dbReference>
<dbReference type="IntAct" id="P47183">
    <property type="interactions" value="2"/>
</dbReference>
<dbReference type="MINT" id="P47183"/>
<dbReference type="STRING" id="4932.YJR156C"/>
<dbReference type="PaxDb" id="4932-YJR156C"/>
<dbReference type="PeptideAtlas" id="P47183"/>
<dbReference type="EnsemblFungi" id="YJR156C_mRNA">
    <property type="protein sequence ID" value="YJR156C"/>
    <property type="gene ID" value="YJR156C"/>
</dbReference>
<dbReference type="GeneID" id="853621"/>
<dbReference type="KEGG" id="sce:YJR156C"/>
<dbReference type="AGR" id="SGD:S000003917"/>
<dbReference type="SGD" id="S000003917">
    <property type="gene designation" value="THI11"/>
</dbReference>
<dbReference type="VEuPathDB" id="FungiDB:YJR156C"/>
<dbReference type="eggNOG" id="ENOG502QQ87">
    <property type="taxonomic scope" value="Eukaryota"/>
</dbReference>
<dbReference type="GeneTree" id="ENSGT00940000176330"/>
<dbReference type="HOGENOM" id="CLU_028871_6_3_1"/>
<dbReference type="InParanoid" id="P47183"/>
<dbReference type="OMA" id="QHEMKAL"/>
<dbReference type="OrthoDB" id="434407at2759"/>
<dbReference type="BioCyc" id="YEAST:MONOMER3O-9135"/>
<dbReference type="UniPathway" id="UPA00060"/>
<dbReference type="PRO" id="PR:P47183"/>
<dbReference type="Proteomes" id="UP000002311">
    <property type="component" value="Chromosome X"/>
</dbReference>
<dbReference type="RNAct" id="P47183">
    <property type="molecule type" value="protein"/>
</dbReference>
<dbReference type="GO" id="GO:0106344">
    <property type="term" value="F:4-amino-5-hydroxymethyl-2-methylpyrimidine phosphate synthase activity from histidine and PLP"/>
    <property type="evidence" value="ECO:0000250"/>
    <property type="project" value="UniProtKB"/>
</dbReference>
<dbReference type="GO" id="GO:0046872">
    <property type="term" value="F:metal ion binding"/>
    <property type="evidence" value="ECO:0007669"/>
    <property type="project" value="UniProtKB-KW"/>
</dbReference>
<dbReference type="GO" id="GO:0009228">
    <property type="term" value="P:thiamine biosynthetic process"/>
    <property type="evidence" value="ECO:0000316"/>
    <property type="project" value="SGD"/>
</dbReference>
<dbReference type="GO" id="GO:0009229">
    <property type="term" value="P:thiamine diphosphate biosynthetic process"/>
    <property type="evidence" value="ECO:0007669"/>
    <property type="project" value="UniProtKB-UniPathway"/>
</dbReference>
<dbReference type="CDD" id="cd13650">
    <property type="entry name" value="PBP2_THI5"/>
    <property type="match status" value="1"/>
</dbReference>
<dbReference type="FunFam" id="3.40.190.10:FF:000246">
    <property type="entry name" value="4-amino-5-hydroxymethyl-2-methylpyrimidine phosphate synthase THI13"/>
    <property type="match status" value="1"/>
</dbReference>
<dbReference type="FunFam" id="3.40.190.10:FF:000187">
    <property type="entry name" value="4-amino-5-hydroxymethyl-2-methylpyrimidine phosphate synthase THI5"/>
    <property type="match status" value="1"/>
</dbReference>
<dbReference type="Gene3D" id="3.40.190.10">
    <property type="entry name" value="Periplasmic binding protein-like II"/>
    <property type="match status" value="2"/>
</dbReference>
<dbReference type="InterPro" id="IPR027939">
    <property type="entry name" value="NMT1/THI5"/>
</dbReference>
<dbReference type="InterPro" id="IPR015168">
    <property type="entry name" value="SsuA/THI5"/>
</dbReference>
<dbReference type="PANTHER" id="PTHR31528">
    <property type="entry name" value="4-AMINO-5-HYDROXYMETHYL-2-METHYLPYRIMIDINE PHOSPHATE SYNTHASE THI11-RELATED"/>
    <property type="match status" value="1"/>
</dbReference>
<dbReference type="PANTHER" id="PTHR31528:SF1">
    <property type="entry name" value="4-AMINO-5-HYDROXYMETHYL-2-METHYLPYRIMIDINE PHOSPHATE SYNTHASE THI11-RELATED"/>
    <property type="match status" value="1"/>
</dbReference>
<dbReference type="Pfam" id="PF09084">
    <property type="entry name" value="NMT1"/>
    <property type="match status" value="1"/>
</dbReference>
<dbReference type="SUPFAM" id="SSF53850">
    <property type="entry name" value="Periplasmic binding protein-like II"/>
    <property type="match status" value="1"/>
</dbReference>